<keyword id="KW-0067">ATP-binding</keyword>
<keyword id="KW-0238">DNA-binding</keyword>
<keyword id="KW-0413">Isomerase</keyword>
<keyword id="KW-0547">Nucleotide-binding</keyword>
<keyword id="KW-0799">Topoisomerase</keyword>
<comment type="function">
    <text evidence="1">Relaxes both positive and negative superturns and exhibits a strong decatenase activity.</text>
</comment>
<comment type="catalytic activity">
    <reaction evidence="1">
        <text>ATP-dependent breakage, passage and rejoining of double-stranded DNA.</text>
        <dbReference type="EC" id="5.6.2.2"/>
    </reaction>
</comment>
<comment type="subunit">
    <text evidence="1">Homodimer. Heterotetramer of two Top6A and two Top6B chains.</text>
</comment>
<comment type="similarity">
    <text evidence="1">Belongs to the TOP6B family.</text>
</comment>
<name>TOP6B_METBF</name>
<reference key="1">
    <citation type="journal article" date="2006" name="J. Bacteriol.">
        <title>The Methanosarcina barkeri genome: comparative analysis with Methanosarcina acetivorans and Methanosarcina mazei reveals extensive rearrangement within methanosarcinal genomes.</title>
        <authorList>
            <person name="Maeder D.L."/>
            <person name="Anderson I."/>
            <person name="Brettin T.S."/>
            <person name="Bruce D.C."/>
            <person name="Gilna P."/>
            <person name="Han C.S."/>
            <person name="Lapidus A."/>
            <person name="Metcalf W.W."/>
            <person name="Saunders E."/>
            <person name="Tapia R."/>
            <person name="Sowers K.R."/>
        </authorList>
    </citation>
    <scope>NUCLEOTIDE SEQUENCE [LARGE SCALE GENOMIC DNA]</scope>
    <source>
        <strain>Fusaro / DSM 804</strain>
    </source>
</reference>
<sequence>MEFTIAEELAKNQKSISVAEFFEKNRQILGFDSAPRSLITTVKEAVDNALDACEEAGILPDILVQIERTGQDYVTVIIEDNGPGIIKEQIPKVFAKLLYGSRFHALKQSRGQQGIGISAAVLYAQMTAGKQTKILSKTGSGNPAHYYELMINTSTNEPDILKDEIRDWFRPHGTQIELEMKAAYVKGRRQSISEYLKATAIVNPHARITLIEPDGNEEVFERATDKMPKPAEEILPHPEGIELGTLMKMLHYTERQKLAPFLRYSFCKIGLLTAEEICKASGLDPEIDPHALGRHEARKLIEAFEKVKIMSPPTDCLSPIGEELIYRGLEKETNVDFIATSTRKPAVYSGNPFVVEVGLAYGGKLPKEEKISIMRFANRVPLLYQQGGCVTTHAVEDIKWKQYGLNQPGGGVPVGPAILLIHVASINVPFTSESKDAIADIPVIKDEIDLAIKDVARKLKHYLSKQSNLKKRREKEIIITKVLPKMAVKVANILEKDVPDINPVVAKIMGNLLVHRKVKRNEDGTADVVIKVKNFGTSAYAFKVHEMLPCTILGAKPEPKVVTLGNDYDYVWDISAAAGSSKVLSYRIESTTDKELGTFPDLVVEGLEEELVTGAKAFKGV</sequence>
<evidence type="ECO:0000255" key="1">
    <source>
        <dbReference type="HAMAP-Rule" id="MF_00322"/>
    </source>
</evidence>
<proteinExistence type="inferred from homology"/>
<gene>
    <name evidence="1" type="primary">top6B</name>
    <name type="ordered locus">Mbar_A2807</name>
</gene>
<feature type="chain" id="PRO_1000005870" description="Type 2 DNA topoisomerase 6 subunit B">
    <location>
        <begin position="1"/>
        <end position="621"/>
    </location>
</feature>
<feature type="binding site" evidence="1">
    <location>
        <position position="48"/>
    </location>
    <ligand>
        <name>ATP</name>
        <dbReference type="ChEBI" id="CHEBI:30616"/>
    </ligand>
</feature>
<feature type="binding site" evidence="1">
    <location>
        <position position="80"/>
    </location>
    <ligand>
        <name>ATP</name>
        <dbReference type="ChEBI" id="CHEBI:30616"/>
    </ligand>
</feature>
<feature type="binding site" evidence="1">
    <location>
        <begin position="101"/>
        <end position="102"/>
    </location>
    <ligand>
        <name>ATP</name>
        <dbReference type="ChEBI" id="CHEBI:30616"/>
    </ligand>
</feature>
<feature type="binding site" evidence="1">
    <location>
        <begin position="111"/>
        <end position="118"/>
    </location>
    <ligand>
        <name>ATP</name>
        <dbReference type="ChEBI" id="CHEBI:30616"/>
    </ligand>
</feature>
<feature type="binding site" evidence="1">
    <location>
        <position position="435"/>
    </location>
    <ligand>
        <name>ATP</name>
        <dbReference type="ChEBI" id="CHEBI:30616"/>
    </ligand>
</feature>
<organism>
    <name type="scientific">Methanosarcina barkeri (strain Fusaro / DSM 804)</name>
    <dbReference type="NCBI Taxonomy" id="269797"/>
    <lineage>
        <taxon>Archaea</taxon>
        <taxon>Methanobacteriati</taxon>
        <taxon>Methanobacteriota</taxon>
        <taxon>Stenosarchaea group</taxon>
        <taxon>Methanomicrobia</taxon>
        <taxon>Methanosarcinales</taxon>
        <taxon>Methanosarcinaceae</taxon>
        <taxon>Methanosarcina</taxon>
    </lineage>
</organism>
<accession>Q468I5</accession>
<dbReference type="EC" id="5.6.2.2" evidence="1"/>
<dbReference type="EMBL" id="CP000099">
    <property type="protein sequence ID" value="AAZ71707.1"/>
    <property type="molecule type" value="Genomic_DNA"/>
</dbReference>
<dbReference type="SMR" id="Q468I5"/>
<dbReference type="STRING" id="269797.Mbar_A2807"/>
<dbReference type="PaxDb" id="269797-Mbar_A2807"/>
<dbReference type="KEGG" id="mba:Mbar_A2807"/>
<dbReference type="eggNOG" id="arCOG01165">
    <property type="taxonomic scope" value="Archaea"/>
</dbReference>
<dbReference type="HOGENOM" id="CLU_006403_0_0_2"/>
<dbReference type="OrthoDB" id="65493at2157"/>
<dbReference type="GO" id="GO:0005524">
    <property type="term" value="F:ATP binding"/>
    <property type="evidence" value="ECO:0007669"/>
    <property type="project" value="UniProtKB-UniRule"/>
</dbReference>
<dbReference type="GO" id="GO:0003677">
    <property type="term" value="F:DNA binding"/>
    <property type="evidence" value="ECO:0007669"/>
    <property type="project" value="UniProtKB-UniRule"/>
</dbReference>
<dbReference type="GO" id="GO:0003918">
    <property type="term" value="F:DNA topoisomerase type II (double strand cut, ATP-hydrolyzing) activity"/>
    <property type="evidence" value="ECO:0007669"/>
    <property type="project" value="UniProtKB-UniRule"/>
</dbReference>
<dbReference type="GO" id="GO:0006265">
    <property type="term" value="P:DNA topological change"/>
    <property type="evidence" value="ECO:0007669"/>
    <property type="project" value="UniProtKB-UniRule"/>
</dbReference>
<dbReference type="CDD" id="cd16933">
    <property type="entry name" value="HATPase_TopVIB-like"/>
    <property type="match status" value="1"/>
</dbReference>
<dbReference type="CDD" id="cd00823">
    <property type="entry name" value="TopoIIB_Trans"/>
    <property type="match status" value="1"/>
</dbReference>
<dbReference type="FunFam" id="1.10.8.50:FF:000016">
    <property type="entry name" value="Type 2 DNA topoisomerase 6 subunit B"/>
    <property type="match status" value="1"/>
</dbReference>
<dbReference type="FunFam" id="3.30.230.10:FF:000089">
    <property type="entry name" value="Type 2 DNA topoisomerase 6 subunit B"/>
    <property type="match status" value="1"/>
</dbReference>
<dbReference type="FunFam" id="3.30.565.10:FF:000062">
    <property type="entry name" value="Type 2 DNA topoisomerase 6 subunit B"/>
    <property type="match status" value="1"/>
</dbReference>
<dbReference type="Gene3D" id="1.10.8.50">
    <property type="match status" value="1"/>
</dbReference>
<dbReference type="Gene3D" id="2.60.40.2960">
    <property type="match status" value="1"/>
</dbReference>
<dbReference type="Gene3D" id="3.30.230.10">
    <property type="match status" value="1"/>
</dbReference>
<dbReference type="Gene3D" id="6.10.20.80">
    <property type="match status" value="1"/>
</dbReference>
<dbReference type="Gene3D" id="3.30.565.10">
    <property type="entry name" value="Histidine kinase-like ATPase, C-terminal domain"/>
    <property type="match status" value="1"/>
</dbReference>
<dbReference type="HAMAP" id="MF_00322">
    <property type="entry name" value="Top6B"/>
    <property type="match status" value="1"/>
</dbReference>
<dbReference type="InterPro" id="IPR036890">
    <property type="entry name" value="HATPase_C_sf"/>
</dbReference>
<dbReference type="InterPro" id="IPR020568">
    <property type="entry name" value="Ribosomal_Su5_D2-typ_SF"/>
</dbReference>
<dbReference type="InterPro" id="IPR010979">
    <property type="entry name" value="Ribosomal_uS13-like_H2TH"/>
</dbReference>
<dbReference type="InterPro" id="IPR014721">
    <property type="entry name" value="Ribsml_uS5_D2-typ_fold_subgr"/>
</dbReference>
<dbReference type="InterPro" id="IPR040494">
    <property type="entry name" value="Top6b_C"/>
</dbReference>
<dbReference type="InterPro" id="IPR005734">
    <property type="entry name" value="TopoVI_B"/>
</dbReference>
<dbReference type="InterPro" id="IPR015320">
    <property type="entry name" value="TopoVI_B_transducer"/>
</dbReference>
<dbReference type="NCBIfam" id="NF003218">
    <property type="entry name" value="PRK04184.1"/>
    <property type="match status" value="1"/>
</dbReference>
<dbReference type="NCBIfam" id="TIGR01052">
    <property type="entry name" value="top6b"/>
    <property type="match status" value="1"/>
</dbReference>
<dbReference type="PANTHER" id="PTHR48444">
    <property type="entry name" value="DNA TOPOISOMERASE 6 SUBUNIT B"/>
    <property type="match status" value="1"/>
</dbReference>
<dbReference type="PANTHER" id="PTHR48444:SF1">
    <property type="entry name" value="DNA TOPOISOMERASE 6 SUBUNIT B"/>
    <property type="match status" value="1"/>
</dbReference>
<dbReference type="Pfam" id="PF02518">
    <property type="entry name" value="HATPase_c"/>
    <property type="match status" value="1"/>
</dbReference>
<dbReference type="Pfam" id="PF18000">
    <property type="entry name" value="Top6b_C"/>
    <property type="match status" value="1"/>
</dbReference>
<dbReference type="Pfam" id="PF09239">
    <property type="entry name" value="Topo-VIb_trans"/>
    <property type="match status" value="1"/>
</dbReference>
<dbReference type="PIRSF" id="PIRSF006553">
    <property type="entry name" value="TopoVI_B"/>
    <property type="match status" value="1"/>
</dbReference>
<dbReference type="SMART" id="SM00387">
    <property type="entry name" value="HATPase_c"/>
    <property type="match status" value="1"/>
</dbReference>
<dbReference type="SUPFAM" id="SSF55874">
    <property type="entry name" value="ATPase domain of HSP90 chaperone/DNA topoisomerase II/histidine kinase"/>
    <property type="match status" value="1"/>
</dbReference>
<dbReference type="SUPFAM" id="SSF54211">
    <property type="entry name" value="Ribosomal protein S5 domain 2-like"/>
    <property type="match status" value="1"/>
</dbReference>
<dbReference type="SUPFAM" id="SSF46946">
    <property type="entry name" value="S13-like H2TH domain"/>
    <property type="match status" value="1"/>
</dbReference>
<protein>
    <recommendedName>
        <fullName evidence="1">Type 2 DNA topoisomerase 6 subunit B</fullName>
        <ecNumber evidence="1">5.6.2.2</ecNumber>
    </recommendedName>
    <alternativeName>
        <fullName evidence="1">Type II DNA topoisomerase VI subunit B</fullName>
        <shortName evidence="1">TopoVI-B</shortName>
    </alternativeName>
</protein>